<evidence type="ECO:0000255" key="1">
    <source>
        <dbReference type="HAMAP-Rule" id="MF_01814"/>
    </source>
</evidence>
<feature type="chain" id="PRO_0000172828" description="Transcription factor FapR">
    <location>
        <begin position="1"/>
        <end position="185"/>
    </location>
</feature>
<keyword id="KW-0238">DNA-binding</keyword>
<keyword id="KW-0275">Fatty acid biosynthesis</keyword>
<keyword id="KW-0276">Fatty acid metabolism</keyword>
<keyword id="KW-0444">Lipid biosynthesis</keyword>
<keyword id="KW-0443">Lipid metabolism</keyword>
<keyword id="KW-0678">Repressor</keyword>
<keyword id="KW-0804">Transcription</keyword>
<keyword id="KW-0805">Transcription regulation</keyword>
<reference key="1">
    <citation type="journal article" date="2004" name="Proc. Natl. Acad. Sci. U.S.A.">
        <title>Complete genomes of two clinical Staphylococcus aureus strains: evidence for the rapid evolution of virulence and drug resistance.</title>
        <authorList>
            <person name="Holden M.T.G."/>
            <person name="Feil E.J."/>
            <person name="Lindsay J.A."/>
            <person name="Peacock S.J."/>
            <person name="Day N.P.J."/>
            <person name="Enright M.C."/>
            <person name="Foster T.J."/>
            <person name="Moore C.E."/>
            <person name="Hurst L."/>
            <person name="Atkin R."/>
            <person name="Barron A."/>
            <person name="Bason N."/>
            <person name="Bentley S.D."/>
            <person name="Chillingworth C."/>
            <person name="Chillingworth T."/>
            <person name="Churcher C."/>
            <person name="Clark L."/>
            <person name="Corton C."/>
            <person name="Cronin A."/>
            <person name="Doggett J."/>
            <person name="Dowd L."/>
            <person name="Feltwell T."/>
            <person name="Hance Z."/>
            <person name="Harris B."/>
            <person name="Hauser H."/>
            <person name="Holroyd S."/>
            <person name="Jagels K."/>
            <person name="James K.D."/>
            <person name="Lennard N."/>
            <person name="Line A."/>
            <person name="Mayes R."/>
            <person name="Moule S."/>
            <person name="Mungall K."/>
            <person name="Ormond D."/>
            <person name="Quail M.A."/>
            <person name="Rabbinowitsch E."/>
            <person name="Rutherford K.M."/>
            <person name="Sanders M."/>
            <person name="Sharp S."/>
            <person name="Simmonds M."/>
            <person name="Stevens K."/>
            <person name="Whitehead S."/>
            <person name="Barrell B.G."/>
            <person name="Spratt B.G."/>
            <person name="Parkhill J."/>
        </authorList>
    </citation>
    <scope>NUCLEOTIDE SEQUENCE [LARGE SCALE GENOMIC DNA]</scope>
    <source>
        <strain>MRSA252</strain>
    </source>
</reference>
<comment type="function">
    <text evidence="1">Transcriptional factor involved in regulation of membrane lipid biosynthesis by repressing genes involved in fatty acid and phospholipid metabolism.</text>
</comment>
<comment type="similarity">
    <text evidence="1">Belongs to the FapR family.</text>
</comment>
<dbReference type="EMBL" id="BX571856">
    <property type="protein sequence ID" value="CAG40206.1"/>
    <property type="molecule type" value="Genomic_DNA"/>
</dbReference>
<dbReference type="SMR" id="Q6GHK7"/>
<dbReference type="KEGG" id="sar:SAR1204"/>
<dbReference type="HOGENOM" id="CLU_095708_0_0_9"/>
<dbReference type="Proteomes" id="UP000000596">
    <property type="component" value="Chromosome"/>
</dbReference>
<dbReference type="GO" id="GO:0003677">
    <property type="term" value="F:DNA binding"/>
    <property type="evidence" value="ECO:0007669"/>
    <property type="project" value="UniProtKB-KW"/>
</dbReference>
<dbReference type="GO" id="GO:0003700">
    <property type="term" value="F:DNA-binding transcription factor activity"/>
    <property type="evidence" value="ECO:0007669"/>
    <property type="project" value="UniProtKB-UniRule"/>
</dbReference>
<dbReference type="GO" id="GO:0006633">
    <property type="term" value="P:fatty acid biosynthetic process"/>
    <property type="evidence" value="ECO:0007669"/>
    <property type="project" value="UniProtKB-KW"/>
</dbReference>
<dbReference type="GO" id="GO:0045892">
    <property type="term" value="P:negative regulation of DNA-templated transcription"/>
    <property type="evidence" value="ECO:0007669"/>
    <property type="project" value="UniProtKB-UniRule"/>
</dbReference>
<dbReference type="GO" id="GO:0045717">
    <property type="term" value="P:negative regulation of fatty acid biosynthetic process"/>
    <property type="evidence" value="ECO:0007669"/>
    <property type="project" value="UniProtKB-UniRule"/>
</dbReference>
<dbReference type="CDD" id="cd03440">
    <property type="entry name" value="hot_dog"/>
    <property type="match status" value="1"/>
</dbReference>
<dbReference type="Gene3D" id="3.10.129.10">
    <property type="entry name" value="Hotdog Thioesterase"/>
    <property type="match status" value="1"/>
</dbReference>
<dbReference type="Gene3D" id="1.10.10.10">
    <property type="entry name" value="Winged helix-like DNA-binding domain superfamily/Winged helix DNA-binding domain"/>
    <property type="match status" value="1"/>
</dbReference>
<dbReference type="HAMAP" id="MF_01814">
    <property type="entry name" value="Transcrip_fact_FapR"/>
    <property type="match status" value="1"/>
</dbReference>
<dbReference type="InterPro" id="IPR029069">
    <property type="entry name" value="HotDog_dom_sf"/>
</dbReference>
<dbReference type="InterPro" id="IPR006683">
    <property type="entry name" value="Thioestr_dom"/>
</dbReference>
<dbReference type="InterPro" id="IPR017275">
    <property type="entry name" value="Transcription_factor_FapR"/>
</dbReference>
<dbReference type="InterPro" id="IPR036388">
    <property type="entry name" value="WH-like_DNA-bd_sf"/>
</dbReference>
<dbReference type="NCBIfam" id="NF003359">
    <property type="entry name" value="PRK04424.1"/>
    <property type="match status" value="1"/>
</dbReference>
<dbReference type="Pfam" id="PF03061">
    <property type="entry name" value="4HBT"/>
    <property type="match status" value="1"/>
</dbReference>
<dbReference type="PIRSF" id="PIRSF037733">
    <property type="entry name" value="Transcription_factor_FapR"/>
    <property type="match status" value="1"/>
</dbReference>
<dbReference type="SUPFAM" id="SSF54637">
    <property type="entry name" value="Thioesterase/thiol ester dehydrase-isomerase"/>
    <property type="match status" value="1"/>
</dbReference>
<proteinExistence type="inferred from homology"/>
<sequence>MKLKKDKRREAIRQQIDSNPFITDHELSDLFQVSIQTIRLDRTYLNIPELRKRIKLVAEKNYDQISSIEEQEFIGDLIQVNPNVKAQSILDITSDSVFHKTGIARGHVLFAQANSLCVALIKQPTVLTHESSIQFIEKVKLNDTVRAEARVVNQTAKHYYVEVKSYVKHTLVFKGNFKMFYDKRG</sequence>
<protein>
    <recommendedName>
        <fullName evidence="1">Transcription factor FapR</fullName>
    </recommendedName>
    <alternativeName>
        <fullName evidence="1">Fatty acid and phospholipid biosynthesis regulator</fullName>
    </alternativeName>
</protein>
<gene>
    <name evidence="1" type="primary">fapR</name>
    <name type="ordered locus">SAR1204</name>
</gene>
<name>FAPR_STAAR</name>
<organism>
    <name type="scientific">Staphylococcus aureus (strain MRSA252)</name>
    <dbReference type="NCBI Taxonomy" id="282458"/>
    <lineage>
        <taxon>Bacteria</taxon>
        <taxon>Bacillati</taxon>
        <taxon>Bacillota</taxon>
        <taxon>Bacilli</taxon>
        <taxon>Bacillales</taxon>
        <taxon>Staphylococcaceae</taxon>
        <taxon>Staphylococcus</taxon>
    </lineage>
</organism>
<accession>Q6GHK7</accession>